<reference key="1">
    <citation type="journal article" date="2009" name="PLoS Genet.">
        <title>Organised genome dynamics in the Escherichia coli species results in highly diverse adaptive paths.</title>
        <authorList>
            <person name="Touchon M."/>
            <person name="Hoede C."/>
            <person name="Tenaillon O."/>
            <person name="Barbe V."/>
            <person name="Baeriswyl S."/>
            <person name="Bidet P."/>
            <person name="Bingen E."/>
            <person name="Bonacorsi S."/>
            <person name="Bouchier C."/>
            <person name="Bouvet O."/>
            <person name="Calteau A."/>
            <person name="Chiapello H."/>
            <person name="Clermont O."/>
            <person name="Cruveiller S."/>
            <person name="Danchin A."/>
            <person name="Diard M."/>
            <person name="Dossat C."/>
            <person name="Karoui M.E."/>
            <person name="Frapy E."/>
            <person name="Garry L."/>
            <person name="Ghigo J.M."/>
            <person name="Gilles A.M."/>
            <person name="Johnson J."/>
            <person name="Le Bouguenec C."/>
            <person name="Lescat M."/>
            <person name="Mangenot S."/>
            <person name="Martinez-Jehanne V."/>
            <person name="Matic I."/>
            <person name="Nassif X."/>
            <person name="Oztas S."/>
            <person name="Petit M.A."/>
            <person name="Pichon C."/>
            <person name="Rouy Z."/>
            <person name="Ruf C.S."/>
            <person name="Schneider D."/>
            <person name="Tourret J."/>
            <person name="Vacherie B."/>
            <person name="Vallenet D."/>
            <person name="Medigue C."/>
            <person name="Rocha E.P.C."/>
            <person name="Denamur E."/>
        </authorList>
    </citation>
    <scope>NUCLEOTIDE SEQUENCE [LARGE SCALE GENOMIC DNA]</scope>
    <source>
        <strain>IAI1</strain>
    </source>
</reference>
<protein>
    <recommendedName>
        <fullName evidence="1">Flagellar L-ring protein</fullName>
    </recommendedName>
    <alternativeName>
        <fullName evidence="1">Basal body L-ring protein</fullName>
    </alternativeName>
</protein>
<comment type="function">
    <text evidence="1">Assembles around the rod to form the L-ring and probably protects the motor/basal body from shearing forces during rotation.</text>
</comment>
<comment type="subunit">
    <text evidence="1">The basal body constitutes a major portion of the flagellar organelle and consists of four rings (L,P,S, and M) mounted on a central rod.</text>
</comment>
<comment type="subcellular location">
    <subcellularLocation>
        <location evidence="1">Cell outer membrane</location>
        <topology evidence="1">Lipid-anchor</topology>
    </subcellularLocation>
    <subcellularLocation>
        <location evidence="1">Bacterial flagellum basal body</location>
    </subcellularLocation>
</comment>
<comment type="similarity">
    <text evidence="1">Belongs to the FlgH family.</text>
</comment>
<proteinExistence type="inferred from homology"/>
<accession>B7M955</accession>
<name>FLGH_ECO8A</name>
<organism>
    <name type="scientific">Escherichia coli O8 (strain IAI1)</name>
    <dbReference type="NCBI Taxonomy" id="585034"/>
    <lineage>
        <taxon>Bacteria</taxon>
        <taxon>Pseudomonadati</taxon>
        <taxon>Pseudomonadota</taxon>
        <taxon>Gammaproteobacteria</taxon>
        <taxon>Enterobacterales</taxon>
        <taxon>Enterobacteriaceae</taxon>
        <taxon>Escherichia</taxon>
    </lineage>
</organism>
<dbReference type="EMBL" id="CU928160">
    <property type="protein sequence ID" value="CAQ97979.1"/>
    <property type="molecule type" value="Genomic_DNA"/>
</dbReference>
<dbReference type="RefSeq" id="WP_001295442.1">
    <property type="nucleotide sequence ID" value="NC_011741.1"/>
</dbReference>
<dbReference type="SMR" id="B7M955"/>
<dbReference type="GeneID" id="93776328"/>
<dbReference type="KEGG" id="ecr:ECIAI1_1115"/>
<dbReference type="HOGENOM" id="CLU_069313_0_0_6"/>
<dbReference type="GO" id="GO:0009427">
    <property type="term" value="C:bacterial-type flagellum basal body, distal rod, L ring"/>
    <property type="evidence" value="ECO:0007669"/>
    <property type="project" value="InterPro"/>
</dbReference>
<dbReference type="GO" id="GO:0009279">
    <property type="term" value="C:cell outer membrane"/>
    <property type="evidence" value="ECO:0007669"/>
    <property type="project" value="UniProtKB-SubCell"/>
</dbReference>
<dbReference type="GO" id="GO:0003774">
    <property type="term" value="F:cytoskeletal motor activity"/>
    <property type="evidence" value="ECO:0007669"/>
    <property type="project" value="InterPro"/>
</dbReference>
<dbReference type="GO" id="GO:0071973">
    <property type="term" value="P:bacterial-type flagellum-dependent cell motility"/>
    <property type="evidence" value="ECO:0007669"/>
    <property type="project" value="InterPro"/>
</dbReference>
<dbReference type="HAMAP" id="MF_00415">
    <property type="entry name" value="FlgH"/>
    <property type="match status" value="1"/>
</dbReference>
<dbReference type="InterPro" id="IPR000527">
    <property type="entry name" value="Flag_Lring"/>
</dbReference>
<dbReference type="NCBIfam" id="NF001301">
    <property type="entry name" value="PRK00249.1-1"/>
    <property type="match status" value="1"/>
</dbReference>
<dbReference type="PANTHER" id="PTHR34933">
    <property type="entry name" value="FLAGELLAR L-RING PROTEIN"/>
    <property type="match status" value="1"/>
</dbReference>
<dbReference type="PANTHER" id="PTHR34933:SF3">
    <property type="entry name" value="FLAGELLAR L-RING PROTEIN"/>
    <property type="match status" value="1"/>
</dbReference>
<dbReference type="Pfam" id="PF02107">
    <property type="entry name" value="FlgH"/>
    <property type="match status" value="1"/>
</dbReference>
<dbReference type="PRINTS" id="PR01008">
    <property type="entry name" value="FLGLRINGFLGH"/>
</dbReference>
<dbReference type="PROSITE" id="PS51257">
    <property type="entry name" value="PROKAR_LIPOPROTEIN"/>
    <property type="match status" value="1"/>
</dbReference>
<evidence type="ECO:0000255" key="1">
    <source>
        <dbReference type="HAMAP-Rule" id="MF_00415"/>
    </source>
</evidence>
<gene>
    <name evidence="1" type="primary">flgH</name>
    <name type="ordered locus">ECIAI1_1115</name>
</gene>
<keyword id="KW-0975">Bacterial flagellum</keyword>
<keyword id="KW-0998">Cell outer membrane</keyword>
<keyword id="KW-0449">Lipoprotein</keyword>
<keyword id="KW-0472">Membrane</keyword>
<keyword id="KW-0564">Palmitate</keyword>
<keyword id="KW-0732">Signal</keyword>
<feature type="signal peptide" evidence="1">
    <location>
        <begin position="1"/>
        <end position="21"/>
    </location>
</feature>
<feature type="chain" id="PRO_1000123947" description="Flagellar L-ring protein">
    <location>
        <begin position="22"/>
        <end position="232"/>
    </location>
</feature>
<feature type="lipid moiety-binding region" description="N-palmitoyl cysteine" evidence="1">
    <location>
        <position position="22"/>
    </location>
</feature>
<feature type="lipid moiety-binding region" description="S-diacylglycerol cysteine" evidence="1">
    <location>
        <position position="22"/>
    </location>
</feature>
<sequence length="232" mass="24615">MQKNAAHTYAISSLLVLSLTGCAWIPSTPLVQGATSAQPVPGPTPVANGSIFQSAQPINYGYQPLFEDRRPRNIGDTLTIVLQENVSASKSSSANASRDGKTNFGFDTVPRYLQGLFGNARADVEASGGNTFNGKGGANASNTFSGTLTVTVDQVLVNGNLHVVGEKQIAINQGTEFIRFSGVVNPRTISGSNTVPSTQVADARIEYVGNGYINEAQNMGWLQRFFLNLSPM</sequence>